<keyword id="KW-0678">Repressor</keyword>
<keyword id="KW-0687">Ribonucleoprotein</keyword>
<keyword id="KW-0689">Ribosomal protein</keyword>
<keyword id="KW-0694">RNA-binding</keyword>
<keyword id="KW-0699">rRNA-binding</keyword>
<keyword id="KW-0810">Translation regulation</keyword>
<keyword id="KW-0820">tRNA-binding</keyword>
<reference key="1">
    <citation type="journal article" date="2007" name="BMC Microbiol.">
        <title>Subtle genetic changes enhance virulence of methicillin resistant and sensitive Staphylococcus aureus.</title>
        <authorList>
            <person name="Highlander S.K."/>
            <person name="Hulten K.G."/>
            <person name="Qin X."/>
            <person name="Jiang H."/>
            <person name="Yerrapragada S."/>
            <person name="Mason E.O. Jr."/>
            <person name="Shang Y."/>
            <person name="Williams T.M."/>
            <person name="Fortunov R.M."/>
            <person name="Liu Y."/>
            <person name="Igboeli O."/>
            <person name="Petrosino J."/>
            <person name="Tirumalai M."/>
            <person name="Uzman A."/>
            <person name="Fox G.E."/>
            <person name="Cardenas A.M."/>
            <person name="Muzny D.M."/>
            <person name="Hemphill L."/>
            <person name="Ding Y."/>
            <person name="Dugan S."/>
            <person name="Blyth P.R."/>
            <person name="Buhay C.J."/>
            <person name="Dinh H.H."/>
            <person name="Hawes A.C."/>
            <person name="Holder M."/>
            <person name="Kovar C.L."/>
            <person name="Lee S.L."/>
            <person name="Liu W."/>
            <person name="Nazareth L.V."/>
            <person name="Wang Q."/>
            <person name="Zhou J."/>
            <person name="Kaplan S.L."/>
            <person name="Weinstock G.M."/>
        </authorList>
    </citation>
    <scope>NUCLEOTIDE SEQUENCE [LARGE SCALE GENOMIC DNA]</scope>
    <source>
        <strain>USA300 / TCH1516</strain>
    </source>
</reference>
<sequence length="230" mass="24708">MAKKGKKYQEAASKVDRTQHYSVEEAIKLAKETSIANFDASVEVAFRLGIDTRKNDQQIRGAVVLPNGTGKSQSVLVFAKGDKIAEAEAAGADYVGEAEYVQKIQQGWFDFDVVVATPDMMGEVGKLGRVLGPKGLMPNPKTGTVTMDVKKAVEEIKAGKVEYRAEKAGIVHASIGKVSFTDEQLIENFNTLQDVLAKAKPSSAKGTYFKSVAVTTTMGPGVKIDTASFK</sequence>
<dbReference type="EMBL" id="CP000730">
    <property type="protein sequence ID" value="ABX28558.1"/>
    <property type="molecule type" value="Genomic_DNA"/>
</dbReference>
<dbReference type="RefSeq" id="WP_001074619.1">
    <property type="nucleotide sequence ID" value="NC_010079.1"/>
</dbReference>
<dbReference type="SMR" id="A8YZN6"/>
<dbReference type="GeneID" id="98344872"/>
<dbReference type="KEGG" id="sax:USA300HOU_0532"/>
<dbReference type="HOGENOM" id="CLU_062853_0_0_9"/>
<dbReference type="GO" id="GO:0015934">
    <property type="term" value="C:large ribosomal subunit"/>
    <property type="evidence" value="ECO:0007669"/>
    <property type="project" value="InterPro"/>
</dbReference>
<dbReference type="GO" id="GO:0019843">
    <property type="term" value="F:rRNA binding"/>
    <property type="evidence" value="ECO:0007669"/>
    <property type="project" value="UniProtKB-UniRule"/>
</dbReference>
<dbReference type="GO" id="GO:0003735">
    <property type="term" value="F:structural constituent of ribosome"/>
    <property type="evidence" value="ECO:0007669"/>
    <property type="project" value="InterPro"/>
</dbReference>
<dbReference type="GO" id="GO:0000049">
    <property type="term" value="F:tRNA binding"/>
    <property type="evidence" value="ECO:0007669"/>
    <property type="project" value="UniProtKB-KW"/>
</dbReference>
<dbReference type="GO" id="GO:0006417">
    <property type="term" value="P:regulation of translation"/>
    <property type="evidence" value="ECO:0007669"/>
    <property type="project" value="UniProtKB-KW"/>
</dbReference>
<dbReference type="GO" id="GO:0006412">
    <property type="term" value="P:translation"/>
    <property type="evidence" value="ECO:0007669"/>
    <property type="project" value="UniProtKB-UniRule"/>
</dbReference>
<dbReference type="CDD" id="cd00403">
    <property type="entry name" value="Ribosomal_L1"/>
    <property type="match status" value="1"/>
</dbReference>
<dbReference type="FunFam" id="3.40.50.790:FF:000001">
    <property type="entry name" value="50S ribosomal protein L1"/>
    <property type="match status" value="1"/>
</dbReference>
<dbReference type="Gene3D" id="3.30.190.20">
    <property type="match status" value="1"/>
</dbReference>
<dbReference type="Gene3D" id="3.40.50.790">
    <property type="match status" value="1"/>
</dbReference>
<dbReference type="HAMAP" id="MF_01318_B">
    <property type="entry name" value="Ribosomal_uL1_B"/>
    <property type="match status" value="1"/>
</dbReference>
<dbReference type="InterPro" id="IPR005878">
    <property type="entry name" value="Ribosom_uL1_bac-type"/>
</dbReference>
<dbReference type="InterPro" id="IPR002143">
    <property type="entry name" value="Ribosomal_uL1"/>
</dbReference>
<dbReference type="InterPro" id="IPR023674">
    <property type="entry name" value="Ribosomal_uL1-like"/>
</dbReference>
<dbReference type="InterPro" id="IPR028364">
    <property type="entry name" value="Ribosomal_uL1/biogenesis"/>
</dbReference>
<dbReference type="InterPro" id="IPR016095">
    <property type="entry name" value="Ribosomal_uL1_3-a/b-sand"/>
</dbReference>
<dbReference type="InterPro" id="IPR023673">
    <property type="entry name" value="Ribosomal_uL1_CS"/>
</dbReference>
<dbReference type="NCBIfam" id="TIGR01169">
    <property type="entry name" value="rplA_bact"/>
    <property type="match status" value="1"/>
</dbReference>
<dbReference type="PANTHER" id="PTHR36427">
    <property type="entry name" value="54S RIBOSOMAL PROTEIN L1, MITOCHONDRIAL"/>
    <property type="match status" value="1"/>
</dbReference>
<dbReference type="PANTHER" id="PTHR36427:SF3">
    <property type="entry name" value="LARGE RIBOSOMAL SUBUNIT PROTEIN UL1M"/>
    <property type="match status" value="1"/>
</dbReference>
<dbReference type="Pfam" id="PF00687">
    <property type="entry name" value="Ribosomal_L1"/>
    <property type="match status" value="1"/>
</dbReference>
<dbReference type="PIRSF" id="PIRSF002155">
    <property type="entry name" value="Ribosomal_L1"/>
    <property type="match status" value="1"/>
</dbReference>
<dbReference type="SUPFAM" id="SSF56808">
    <property type="entry name" value="Ribosomal protein L1"/>
    <property type="match status" value="1"/>
</dbReference>
<dbReference type="PROSITE" id="PS01199">
    <property type="entry name" value="RIBOSOMAL_L1"/>
    <property type="match status" value="1"/>
</dbReference>
<name>RL1_STAAT</name>
<feature type="chain" id="PRO_1000086312" description="Large ribosomal subunit protein uL1">
    <location>
        <begin position="1"/>
        <end position="230"/>
    </location>
</feature>
<protein>
    <recommendedName>
        <fullName evidence="1">Large ribosomal subunit protein uL1</fullName>
    </recommendedName>
    <alternativeName>
        <fullName evidence="2">50S ribosomal protein L1</fullName>
    </alternativeName>
</protein>
<evidence type="ECO:0000255" key="1">
    <source>
        <dbReference type="HAMAP-Rule" id="MF_01318"/>
    </source>
</evidence>
<evidence type="ECO:0000305" key="2"/>
<organism>
    <name type="scientific">Staphylococcus aureus (strain USA300 / TCH1516)</name>
    <dbReference type="NCBI Taxonomy" id="451516"/>
    <lineage>
        <taxon>Bacteria</taxon>
        <taxon>Bacillati</taxon>
        <taxon>Bacillota</taxon>
        <taxon>Bacilli</taxon>
        <taxon>Bacillales</taxon>
        <taxon>Staphylococcaceae</taxon>
        <taxon>Staphylococcus</taxon>
    </lineage>
</organism>
<comment type="function">
    <text evidence="1">Binds directly to 23S rRNA. The L1 stalk is quite mobile in the ribosome, and is involved in E site tRNA release.</text>
</comment>
<comment type="function">
    <text evidence="1">Protein L1 is also a translational repressor protein, it controls the translation of the L11 operon by binding to its mRNA.</text>
</comment>
<comment type="subunit">
    <text evidence="1">Part of the 50S ribosomal subunit.</text>
</comment>
<comment type="similarity">
    <text evidence="1">Belongs to the universal ribosomal protein uL1 family.</text>
</comment>
<gene>
    <name evidence="1" type="primary">rplA</name>
    <name type="ordered locus">USA300HOU_0532</name>
</gene>
<proteinExistence type="inferred from homology"/>
<accession>A8YZN6</accession>